<proteinExistence type="inferred from homology"/>
<protein>
    <recommendedName>
        <fullName evidence="1">Adenine phosphoribosyltransferase</fullName>
        <shortName evidence="1">APRT</shortName>
        <ecNumber evidence="1">2.4.2.7</ecNumber>
    </recommendedName>
</protein>
<sequence length="187" mass="20208">MMSTSDAPLDPVEFIHSRIRTVPDWPQPGVMFRDITPLLQSAKALRVLVDLFVERYVDAKLDYIAGLDARGFIIAPIVAYELSVGFVPIRKVGKLPYATQRESYALEYGTATVEIHEDACKPGDRVVIVDDLIATGGTMMAGKNLLERLGAVVVEGAAIVDLPDLGGSALLRGAGLPLYTVTEFPGH</sequence>
<name>APT_BURP0</name>
<evidence type="ECO:0000255" key="1">
    <source>
        <dbReference type="HAMAP-Rule" id="MF_00004"/>
    </source>
</evidence>
<evidence type="ECO:0000305" key="2"/>
<dbReference type="EC" id="2.4.2.7" evidence="1"/>
<dbReference type="EMBL" id="CP000572">
    <property type="protein sequence ID" value="ABN92536.1"/>
    <property type="status" value="ALT_INIT"/>
    <property type="molecule type" value="Genomic_DNA"/>
</dbReference>
<dbReference type="RefSeq" id="WP_004534111.1">
    <property type="nucleotide sequence ID" value="NC_009076.1"/>
</dbReference>
<dbReference type="SMR" id="A3NRB5"/>
<dbReference type="KEGG" id="bpl:BURPS1106A_0604"/>
<dbReference type="HOGENOM" id="CLU_063339_3_0_4"/>
<dbReference type="UniPathway" id="UPA00588">
    <property type="reaction ID" value="UER00646"/>
</dbReference>
<dbReference type="Proteomes" id="UP000006738">
    <property type="component" value="Chromosome I"/>
</dbReference>
<dbReference type="GO" id="GO:0005737">
    <property type="term" value="C:cytoplasm"/>
    <property type="evidence" value="ECO:0007669"/>
    <property type="project" value="UniProtKB-SubCell"/>
</dbReference>
<dbReference type="GO" id="GO:0002055">
    <property type="term" value="F:adenine binding"/>
    <property type="evidence" value="ECO:0007669"/>
    <property type="project" value="TreeGrafter"/>
</dbReference>
<dbReference type="GO" id="GO:0003999">
    <property type="term" value="F:adenine phosphoribosyltransferase activity"/>
    <property type="evidence" value="ECO:0007669"/>
    <property type="project" value="UniProtKB-UniRule"/>
</dbReference>
<dbReference type="GO" id="GO:0016208">
    <property type="term" value="F:AMP binding"/>
    <property type="evidence" value="ECO:0007669"/>
    <property type="project" value="TreeGrafter"/>
</dbReference>
<dbReference type="GO" id="GO:0006168">
    <property type="term" value="P:adenine salvage"/>
    <property type="evidence" value="ECO:0007669"/>
    <property type="project" value="InterPro"/>
</dbReference>
<dbReference type="GO" id="GO:0044209">
    <property type="term" value="P:AMP salvage"/>
    <property type="evidence" value="ECO:0007669"/>
    <property type="project" value="UniProtKB-UniRule"/>
</dbReference>
<dbReference type="GO" id="GO:0006166">
    <property type="term" value="P:purine ribonucleoside salvage"/>
    <property type="evidence" value="ECO:0007669"/>
    <property type="project" value="UniProtKB-KW"/>
</dbReference>
<dbReference type="CDD" id="cd06223">
    <property type="entry name" value="PRTases_typeI"/>
    <property type="match status" value="1"/>
</dbReference>
<dbReference type="FunFam" id="3.40.50.2020:FF:000021">
    <property type="entry name" value="Adenine phosphoribosyltransferase"/>
    <property type="match status" value="1"/>
</dbReference>
<dbReference type="Gene3D" id="3.40.50.2020">
    <property type="match status" value="1"/>
</dbReference>
<dbReference type="HAMAP" id="MF_00004">
    <property type="entry name" value="Aden_phosphoribosyltr"/>
    <property type="match status" value="1"/>
</dbReference>
<dbReference type="InterPro" id="IPR005764">
    <property type="entry name" value="Ade_phspho_trans"/>
</dbReference>
<dbReference type="InterPro" id="IPR000836">
    <property type="entry name" value="PRibTrfase_dom"/>
</dbReference>
<dbReference type="InterPro" id="IPR029057">
    <property type="entry name" value="PRTase-like"/>
</dbReference>
<dbReference type="InterPro" id="IPR050054">
    <property type="entry name" value="UPRTase/APRTase"/>
</dbReference>
<dbReference type="NCBIfam" id="TIGR01090">
    <property type="entry name" value="apt"/>
    <property type="match status" value="1"/>
</dbReference>
<dbReference type="NCBIfam" id="NF002634">
    <property type="entry name" value="PRK02304.1-3"/>
    <property type="match status" value="1"/>
</dbReference>
<dbReference type="NCBIfam" id="NF002636">
    <property type="entry name" value="PRK02304.1-5"/>
    <property type="match status" value="1"/>
</dbReference>
<dbReference type="PANTHER" id="PTHR32315">
    <property type="entry name" value="ADENINE PHOSPHORIBOSYLTRANSFERASE"/>
    <property type="match status" value="1"/>
</dbReference>
<dbReference type="PANTHER" id="PTHR32315:SF3">
    <property type="entry name" value="ADENINE PHOSPHORIBOSYLTRANSFERASE"/>
    <property type="match status" value="1"/>
</dbReference>
<dbReference type="Pfam" id="PF00156">
    <property type="entry name" value="Pribosyltran"/>
    <property type="match status" value="1"/>
</dbReference>
<dbReference type="SUPFAM" id="SSF53271">
    <property type="entry name" value="PRTase-like"/>
    <property type="match status" value="1"/>
</dbReference>
<dbReference type="PROSITE" id="PS00103">
    <property type="entry name" value="PUR_PYR_PR_TRANSFER"/>
    <property type="match status" value="1"/>
</dbReference>
<organism>
    <name type="scientific">Burkholderia pseudomallei (strain 1106a)</name>
    <dbReference type="NCBI Taxonomy" id="357348"/>
    <lineage>
        <taxon>Bacteria</taxon>
        <taxon>Pseudomonadati</taxon>
        <taxon>Pseudomonadota</taxon>
        <taxon>Betaproteobacteria</taxon>
        <taxon>Burkholderiales</taxon>
        <taxon>Burkholderiaceae</taxon>
        <taxon>Burkholderia</taxon>
        <taxon>pseudomallei group</taxon>
    </lineage>
</organism>
<accession>A3NRB5</accession>
<reference key="1">
    <citation type="journal article" date="2010" name="Genome Biol. Evol.">
        <title>Continuing evolution of Burkholderia mallei through genome reduction and large-scale rearrangements.</title>
        <authorList>
            <person name="Losada L."/>
            <person name="Ronning C.M."/>
            <person name="DeShazer D."/>
            <person name="Woods D."/>
            <person name="Fedorova N."/>
            <person name="Kim H.S."/>
            <person name="Shabalina S.A."/>
            <person name="Pearson T.R."/>
            <person name="Brinkac L."/>
            <person name="Tan P."/>
            <person name="Nandi T."/>
            <person name="Crabtree J."/>
            <person name="Badger J."/>
            <person name="Beckstrom-Sternberg S."/>
            <person name="Saqib M."/>
            <person name="Schutzer S.E."/>
            <person name="Keim P."/>
            <person name="Nierman W.C."/>
        </authorList>
    </citation>
    <scope>NUCLEOTIDE SEQUENCE [LARGE SCALE GENOMIC DNA]</scope>
    <source>
        <strain>1106a</strain>
    </source>
</reference>
<comment type="function">
    <text evidence="1">Catalyzes a salvage reaction resulting in the formation of AMP, that is energically less costly than de novo synthesis.</text>
</comment>
<comment type="catalytic activity">
    <reaction evidence="1">
        <text>AMP + diphosphate = 5-phospho-alpha-D-ribose 1-diphosphate + adenine</text>
        <dbReference type="Rhea" id="RHEA:16609"/>
        <dbReference type="ChEBI" id="CHEBI:16708"/>
        <dbReference type="ChEBI" id="CHEBI:33019"/>
        <dbReference type="ChEBI" id="CHEBI:58017"/>
        <dbReference type="ChEBI" id="CHEBI:456215"/>
        <dbReference type="EC" id="2.4.2.7"/>
    </reaction>
</comment>
<comment type="pathway">
    <text evidence="1">Purine metabolism; AMP biosynthesis via salvage pathway; AMP from adenine: step 1/1.</text>
</comment>
<comment type="subunit">
    <text evidence="1">Homodimer.</text>
</comment>
<comment type="subcellular location">
    <subcellularLocation>
        <location evidence="1">Cytoplasm</location>
    </subcellularLocation>
</comment>
<comment type="similarity">
    <text evidence="1">Belongs to the purine/pyrimidine phosphoribosyltransferase family.</text>
</comment>
<comment type="sequence caution" evidence="2">
    <conflict type="erroneous initiation">
        <sequence resource="EMBL-CDS" id="ABN92536"/>
    </conflict>
</comment>
<feature type="chain" id="PRO_0000321347" description="Adenine phosphoribosyltransferase">
    <location>
        <begin position="1"/>
        <end position="187"/>
    </location>
</feature>
<gene>
    <name evidence="1" type="primary">apt</name>
    <name type="ordered locus">BURPS1106A_0604</name>
</gene>
<keyword id="KW-0963">Cytoplasm</keyword>
<keyword id="KW-0328">Glycosyltransferase</keyword>
<keyword id="KW-0660">Purine salvage</keyword>
<keyword id="KW-0808">Transferase</keyword>